<feature type="chain" id="PRO_0000200070" description="Homeobox protein Hox-A6">
    <location>
        <begin position="1"/>
        <end position="229"/>
    </location>
</feature>
<feature type="DNA-binding region" description="Homeobox" evidence="2">
    <location>
        <begin position="151"/>
        <end position="210"/>
    </location>
</feature>
<feature type="region of interest" description="Disordered" evidence="3">
    <location>
        <begin position="210"/>
        <end position="229"/>
    </location>
</feature>
<feature type="short sequence motif" description="Antp-type hexapeptide">
    <location>
        <begin position="132"/>
        <end position="137"/>
    </location>
</feature>
<feature type="compositionally biased region" description="Acidic residues" evidence="3">
    <location>
        <begin position="219"/>
        <end position="229"/>
    </location>
</feature>
<protein>
    <recommendedName>
        <fullName>Homeobox protein Hox-A6</fullName>
    </recommendedName>
</protein>
<keyword id="KW-0217">Developmental protein</keyword>
<keyword id="KW-0238">DNA-binding</keyword>
<keyword id="KW-0371">Homeobox</keyword>
<keyword id="KW-0539">Nucleus</keyword>
<keyword id="KW-0804">Transcription</keyword>
<keyword id="KW-0805">Transcription regulation</keyword>
<dbReference type="EMBL" id="AF224262">
    <property type="protein sequence ID" value="AAF44644.1"/>
    <property type="molecule type" value="Genomic_DNA"/>
</dbReference>
<dbReference type="SMR" id="Q9IA24"/>
<dbReference type="GO" id="GO:0005634">
    <property type="term" value="C:nucleus"/>
    <property type="evidence" value="ECO:0007669"/>
    <property type="project" value="UniProtKB-SubCell"/>
</dbReference>
<dbReference type="GO" id="GO:0000981">
    <property type="term" value="F:DNA-binding transcription factor activity, RNA polymerase II-specific"/>
    <property type="evidence" value="ECO:0007669"/>
    <property type="project" value="InterPro"/>
</dbReference>
<dbReference type="GO" id="GO:0000978">
    <property type="term" value="F:RNA polymerase II cis-regulatory region sequence-specific DNA binding"/>
    <property type="evidence" value="ECO:0007669"/>
    <property type="project" value="TreeGrafter"/>
</dbReference>
<dbReference type="GO" id="GO:0009952">
    <property type="term" value="P:anterior/posterior pattern specification"/>
    <property type="evidence" value="ECO:0007669"/>
    <property type="project" value="TreeGrafter"/>
</dbReference>
<dbReference type="CDD" id="cd00086">
    <property type="entry name" value="homeodomain"/>
    <property type="match status" value="1"/>
</dbReference>
<dbReference type="FunFam" id="1.10.10.60:FF:000017">
    <property type="entry name" value="Homeobox protein antennapedia"/>
    <property type="match status" value="1"/>
</dbReference>
<dbReference type="Gene3D" id="1.10.10.60">
    <property type="entry name" value="Homeodomain-like"/>
    <property type="match status" value="1"/>
</dbReference>
<dbReference type="InterPro" id="IPR050296">
    <property type="entry name" value="Antp_homeobox"/>
</dbReference>
<dbReference type="InterPro" id="IPR001356">
    <property type="entry name" value="HD"/>
</dbReference>
<dbReference type="InterPro" id="IPR020479">
    <property type="entry name" value="HD_metazoa"/>
</dbReference>
<dbReference type="InterPro" id="IPR017995">
    <property type="entry name" value="Homeobox_antennapedia"/>
</dbReference>
<dbReference type="InterPro" id="IPR001827">
    <property type="entry name" value="Homeobox_Antennapedia_CS"/>
</dbReference>
<dbReference type="InterPro" id="IPR017970">
    <property type="entry name" value="Homeobox_CS"/>
</dbReference>
<dbReference type="InterPro" id="IPR009057">
    <property type="entry name" value="Homeodomain-like_sf"/>
</dbReference>
<dbReference type="PANTHER" id="PTHR45659">
    <property type="entry name" value="HOMEOBOX PROTEIN HOX"/>
    <property type="match status" value="1"/>
</dbReference>
<dbReference type="PANTHER" id="PTHR45659:SF14">
    <property type="entry name" value="HOMEOBOX PROTEIN HOX-A6"/>
    <property type="match status" value="1"/>
</dbReference>
<dbReference type="Pfam" id="PF00046">
    <property type="entry name" value="Homeodomain"/>
    <property type="match status" value="1"/>
</dbReference>
<dbReference type="PRINTS" id="PR00025">
    <property type="entry name" value="ANTENNAPEDIA"/>
</dbReference>
<dbReference type="PRINTS" id="PR00024">
    <property type="entry name" value="HOMEOBOX"/>
</dbReference>
<dbReference type="SMART" id="SM00389">
    <property type="entry name" value="HOX"/>
    <property type="match status" value="1"/>
</dbReference>
<dbReference type="SUPFAM" id="SSF46689">
    <property type="entry name" value="Homeodomain-like"/>
    <property type="match status" value="1"/>
</dbReference>
<dbReference type="PROSITE" id="PS00032">
    <property type="entry name" value="ANTENNAPEDIA"/>
    <property type="match status" value="1"/>
</dbReference>
<dbReference type="PROSITE" id="PS00027">
    <property type="entry name" value="HOMEOBOX_1"/>
    <property type="match status" value="1"/>
</dbReference>
<dbReference type="PROSITE" id="PS50071">
    <property type="entry name" value="HOMEOBOX_2"/>
    <property type="match status" value="1"/>
</dbReference>
<organism>
    <name type="scientific">Heterodontus francisci</name>
    <name type="common">Horn shark</name>
    <name type="synonym">Cestracion francisci</name>
    <dbReference type="NCBI Taxonomy" id="7792"/>
    <lineage>
        <taxon>Eukaryota</taxon>
        <taxon>Metazoa</taxon>
        <taxon>Chordata</taxon>
        <taxon>Craniata</taxon>
        <taxon>Vertebrata</taxon>
        <taxon>Chondrichthyes</taxon>
        <taxon>Elasmobranchii</taxon>
        <taxon>Galeomorphii</taxon>
        <taxon>Heterodontoidea</taxon>
        <taxon>Heterodontiformes</taxon>
        <taxon>Heterodontidae</taxon>
        <taxon>Heterodontus</taxon>
    </lineage>
</organism>
<sequence>MSSYFVNPTFPVSLPSGQDSFLGQIPLYTTGYDALRHFPASYGAATLQDKSYSSPCYYQQSNSVIACNRASYDYGASCFYPEKDLASVSPSGSGKHRAQDDFFSSDQHYKPDCAQNKILSEEGNDRKYSTPIYPWMQRMNSSSSSVFGPHGRRGRQTYTRFQTLELEKEFHFNRYLTRRRRIEIANALCLTERQIKIWFQNRRMKWKKENKLLNTTESNSEEAEDKTGE</sequence>
<name>HXA6_HETFR</name>
<accession>Q9IA24</accession>
<proteinExistence type="inferred from homology"/>
<gene>
    <name type="primary">HOXA6</name>
</gene>
<evidence type="ECO:0000250" key="1"/>
<evidence type="ECO:0000255" key="2">
    <source>
        <dbReference type="PROSITE-ProRule" id="PRU00108"/>
    </source>
</evidence>
<evidence type="ECO:0000256" key="3">
    <source>
        <dbReference type="SAM" id="MobiDB-lite"/>
    </source>
</evidence>
<evidence type="ECO:0000305" key="4"/>
<comment type="function">
    <text evidence="1">Sequence-specific transcription factor which is part of a developmental regulatory system that provides cells with specific positional identities on the anterior-posterior axis.</text>
</comment>
<comment type="subcellular location">
    <subcellularLocation>
        <location evidence="2">Nucleus</location>
    </subcellularLocation>
</comment>
<comment type="similarity">
    <text evidence="4">Belongs to the Antp homeobox family.</text>
</comment>
<reference key="1">
    <citation type="journal article" date="2000" name="Proc. Natl. Acad. Sci. U.S.A.">
        <title>Hox cluster genomics in the horn shark, Heterodontus francisci.</title>
        <authorList>
            <person name="Kim C.B."/>
            <person name="Amemiya C."/>
            <person name="Bailey W."/>
            <person name="Kawasaki K."/>
            <person name="Mezey J."/>
            <person name="Miller W."/>
            <person name="Minoshima S."/>
            <person name="Shimizu N."/>
            <person name="Wagner G."/>
            <person name="Ruddle F."/>
        </authorList>
    </citation>
    <scope>NUCLEOTIDE SEQUENCE [GENOMIC DNA]</scope>
</reference>